<accession>P62859</accession>
<accession>P25112</accession>
<comment type="function">
    <text evidence="1">Component of the small ribosomal subunit. The ribosome is a large ribonucleoprotein complex responsible for the synthesis of proteins in the cell. Part of the small subunit (SSU) processome, first precursor of the small eukaryotic ribosomal subunit. During the assembly of the SSU processome in the nucleolus, many ribosome biogenesis factors, an RNA chaperone and ribosomal proteins associate with the nascent pre-rRNA and work in concert to generate RNA folding, modifications, rearrangements and cleavage as well as targeted degradation of pre-ribosomal RNA by the RNA exosome.</text>
</comment>
<comment type="subunit">
    <text evidence="1">Component of the 40S small ribosomal subunit. Part of the small subunit (SSU) processome, composed of more than 70 proteins and the RNA chaperone small nucleolar RNA (snoRNA) U3.</text>
</comment>
<comment type="subcellular location">
    <subcellularLocation>
        <location evidence="1">Cytoplasm</location>
        <location evidence="1">Cytosol</location>
    </subcellularLocation>
    <subcellularLocation>
        <location evidence="1">Cytoplasm</location>
    </subcellularLocation>
    <subcellularLocation>
        <location evidence="2">Rough endoplasmic reticulum</location>
    </subcellularLocation>
    <subcellularLocation>
        <location evidence="1">Nucleus</location>
        <location evidence="1">Nucleolus</location>
    </subcellularLocation>
    <text evidence="1 2">Detected on cytosolic polysomes (By similarity). Detected in ribosomes that are associated with the rough endoplasmic reticulum (By similarity).</text>
</comment>
<comment type="similarity">
    <text evidence="3">Belongs to the eukaryotic ribosomal protein eS28 family.</text>
</comment>
<sequence length="69" mass="7841">MDTSRVQPIKLARVTKVLGRTGSQGQCTQVRVEFMDDTSRSIIRNVKGPVREGDVLTLLESEREARRLR</sequence>
<organism>
    <name type="scientific">Rattus norvegicus</name>
    <name type="common">Rat</name>
    <dbReference type="NCBI Taxonomy" id="10116"/>
    <lineage>
        <taxon>Eukaryota</taxon>
        <taxon>Metazoa</taxon>
        <taxon>Chordata</taxon>
        <taxon>Craniata</taxon>
        <taxon>Vertebrata</taxon>
        <taxon>Euteleostomi</taxon>
        <taxon>Mammalia</taxon>
        <taxon>Eutheria</taxon>
        <taxon>Euarchontoglires</taxon>
        <taxon>Glires</taxon>
        <taxon>Rodentia</taxon>
        <taxon>Myomorpha</taxon>
        <taxon>Muroidea</taxon>
        <taxon>Muridae</taxon>
        <taxon>Murinae</taxon>
        <taxon>Rattus</taxon>
    </lineage>
</organism>
<keyword id="KW-0007">Acetylation</keyword>
<keyword id="KW-0963">Cytoplasm</keyword>
<keyword id="KW-0903">Direct protein sequencing</keyword>
<keyword id="KW-0256">Endoplasmic reticulum</keyword>
<keyword id="KW-0539">Nucleus</keyword>
<keyword id="KW-0597">Phosphoprotein</keyword>
<keyword id="KW-1185">Reference proteome</keyword>
<keyword id="KW-0687">Ribonucleoprotein</keyword>
<keyword id="KW-0689">Ribosomal protein</keyword>
<protein>
    <recommendedName>
        <fullName evidence="3">Small ribosomal subunit protein eS28</fullName>
    </recommendedName>
    <alternativeName>
        <fullName>40S ribosomal protein S28</fullName>
    </alternativeName>
</protein>
<dbReference type="EMBL" id="X59277">
    <property type="protein sequence ID" value="CAA41967.1"/>
    <property type="molecule type" value="mRNA"/>
</dbReference>
<dbReference type="PIR" id="JQ1170">
    <property type="entry name" value="R3RT28"/>
</dbReference>
<dbReference type="RefSeq" id="NP_001099200.1">
    <property type="nucleotide sequence ID" value="NM_001105730.1"/>
</dbReference>
<dbReference type="SMR" id="P62859"/>
<dbReference type="BioGRID" id="606339">
    <property type="interactions" value="1"/>
</dbReference>
<dbReference type="FunCoup" id="P62859">
    <property type="interactions" value="2183"/>
</dbReference>
<dbReference type="IntAct" id="P62859">
    <property type="interactions" value="4"/>
</dbReference>
<dbReference type="STRING" id="10116.ENSRNOP00000060568"/>
<dbReference type="iPTMnet" id="P62859"/>
<dbReference type="PhosphoSitePlus" id="P62859"/>
<dbReference type="jPOST" id="P62859"/>
<dbReference type="PaxDb" id="10116-ENSRNOP00000025380"/>
<dbReference type="Ensembl" id="ENSRNOT00000025380.7">
    <property type="protein sequence ID" value="ENSRNOP00000088092.1"/>
    <property type="gene ID" value="ENSRNOG00000049442.3"/>
</dbReference>
<dbReference type="Ensembl" id="ENSRNOT00000068323.2">
    <property type="protein sequence ID" value="ENSRNOP00000060568.1"/>
    <property type="gene ID" value="ENSRNOG00000042886.2"/>
</dbReference>
<dbReference type="Ensembl" id="ENSRNOT00000114114.1">
    <property type="protein sequence ID" value="ENSRNOP00000078298.1"/>
    <property type="gene ID" value="ENSRNOG00000049442.3"/>
</dbReference>
<dbReference type="GeneID" id="691531"/>
<dbReference type="KEGG" id="rno:691531"/>
<dbReference type="UCSC" id="RGD:621046">
    <property type="organism name" value="rat"/>
</dbReference>
<dbReference type="AGR" id="RGD:621046"/>
<dbReference type="CTD" id="6234"/>
<dbReference type="RGD" id="621046">
    <property type="gene designation" value="Rps28"/>
</dbReference>
<dbReference type="eggNOG" id="KOG3502">
    <property type="taxonomic scope" value="Eukaryota"/>
</dbReference>
<dbReference type="GeneTree" id="ENSGT00910000144227"/>
<dbReference type="HOGENOM" id="CLU_178987_1_0_1"/>
<dbReference type="InParanoid" id="P62859"/>
<dbReference type="OMA" id="NTGMHGE"/>
<dbReference type="OrthoDB" id="10258930at2759"/>
<dbReference type="PhylomeDB" id="P62859"/>
<dbReference type="TreeFam" id="TF300136"/>
<dbReference type="Reactome" id="R-RNO-156827">
    <property type="pathway name" value="L13a-mediated translational silencing of Ceruloplasmin expression"/>
</dbReference>
<dbReference type="Reactome" id="R-RNO-1799339">
    <property type="pathway name" value="SRP-dependent cotranslational protein targeting to membrane"/>
</dbReference>
<dbReference type="Reactome" id="R-RNO-6791226">
    <property type="pathway name" value="Major pathway of rRNA processing in the nucleolus and cytosol"/>
</dbReference>
<dbReference type="Reactome" id="R-RNO-72649">
    <property type="pathway name" value="Translation initiation complex formation"/>
</dbReference>
<dbReference type="Reactome" id="R-RNO-72689">
    <property type="pathway name" value="Formation of a pool of free 40S subunits"/>
</dbReference>
<dbReference type="Reactome" id="R-RNO-72695">
    <property type="pathway name" value="Formation of the ternary complex, and subsequently, the 43S complex"/>
</dbReference>
<dbReference type="Reactome" id="R-RNO-72702">
    <property type="pathway name" value="Ribosomal scanning and start codon recognition"/>
</dbReference>
<dbReference type="Reactome" id="R-RNO-72706">
    <property type="pathway name" value="GTP hydrolysis and joining of the 60S ribosomal subunit"/>
</dbReference>
<dbReference type="Reactome" id="R-RNO-975956">
    <property type="pathway name" value="Nonsense Mediated Decay (NMD) independent of the Exon Junction Complex (EJC)"/>
</dbReference>
<dbReference type="Reactome" id="R-RNO-975957">
    <property type="pathway name" value="Nonsense Mediated Decay (NMD) enhanced by the Exon Junction Complex (EJC)"/>
</dbReference>
<dbReference type="PRO" id="PR:P62859"/>
<dbReference type="Proteomes" id="UP000002494">
    <property type="component" value="Chromosome 16"/>
</dbReference>
<dbReference type="Proteomes" id="UP000002494">
    <property type="component" value="Chromosome 7"/>
</dbReference>
<dbReference type="Bgee" id="ENSRNOG00000042886">
    <property type="expression patterns" value="Expressed in pancreas and 18 other cell types or tissues"/>
</dbReference>
<dbReference type="GO" id="GO:0098556">
    <property type="term" value="C:cytoplasmic side of rough endoplasmic reticulum membrane"/>
    <property type="evidence" value="ECO:0000250"/>
    <property type="project" value="UniProtKB"/>
</dbReference>
<dbReference type="GO" id="GO:0022627">
    <property type="term" value="C:cytosolic small ribosomal subunit"/>
    <property type="evidence" value="ECO:0000314"/>
    <property type="project" value="RGD"/>
</dbReference>
<dbReference type="GO" id="GO:0005730">
    <property type="term" value="C:nucleolus"/>
    <property type="evidence" value="ECO:0007669"/>
    <property type="project" value="UniProtKB-SubCell"/>
</dbReference>
<dbReference type="GO" id="GO:0005840">
    <property type="term" value="C:ribosome"/>
    <property type="evidence" value="ECO:0000250"/>
    <property type="project" value="UniProtKB"/>
</dbReference>
<dbReference type="GO" id="GO:0032040">
    <property type="term" value="C:small-subunit processome"/>
    <property type="evidence" value="ECO:0000250"/>
    <property type="project" value="UniProtKB"/>
</dbReference>
<dbReference type="GO" id="GO:0045202">
    <property type="term" value="C:synapse"/>
    <property type="evidence" value="ECO:0000266"/>
    <property type="project" value="RGD"/>
</dbReference>
<dbReference type="GO" id="GO:0003723">
    <property type="term" value="F:RNA binding"/>
    <property type="evidence" value="ECO:0000304"/>
    <property type="project" value="ProtInc"/>
</dbReference>
<dbReference type="GO" id="GO:0003735">
    <property type="term" value="F:structural constituent of ribosome"/>
    <property type="evidence" value="ECO:0000266"/>
    <property type="project" value="RGD"/>
</dbReference>
<dbReference type="GO" id="GO:0002181">
    <property type="term" value="P:cytoplasmic translation"/>
    <property type="evidence" value="ECO:0000250"/>
    <property type="project" value="UniProtKB"/>
</dbReference>
<dbReference type="GO" id="GO:0030490">
    <property type="term" value="P:maturation of SSU-rRNA"/>
    <property type="evidence" value="ECO:0000318"/>
    <property type="project" value="GO_Central"/>
</dbReference>
<dbReference type="GO" id="GO:0000028">
    <property type="term" value="P:ribosomal small subunit assembly"/>
    <property type="evidence" value="ECO:0000318"/>
    <property type="project" value="GO_Central"/>
</dbReference>
<dbReference type="GO" id="GO:0042274">
    <property type="term" value="P:ribosomal small subunit biogenesis"/>
    <property type="evidence" value="ECO:0000250"/>
    <property type="project" value="UniProtKB"/>
</dbReference>
<dbReference type="GO" id="GO:0042254">
    <property type="term" value="P:ribosome biogenesis"/>
    <property type="evidence" value="ECO:0000250"/>
    <property type="project" value="UniProtKB"/>
</dbReference>
<dbReference type="GO" id="GO:0006364">
    <property type="term" value="P:rRNA processing"/>
    <property type="evidence" value="ECO:0000266"/>
    <property type="project" value="RGD"/>
</dbReference>
<dbReference type="GO" id="GO:0006412">
    <property type="term" value="P:translation"/>
    <property type="evidence" value="ECO:0000304"/>
    <property type="project" value="ProtInc"/>
</dbReference>
<dbReference type="CDD" id="cd04457">
    <property type="entry name" value="S1_S28E"/>
    <property type="match status" value="1"/>
</dbReference>
<dbReference type="FunFam" id="2.40.50.140:FF:000025">
    <property type="entry name" value="40S ribosomal protein S28"/>
    <property type="match status" value="1"/>
</dbReference>
<dbReference type="Gene3D" id="2.40.50.140">
    <property type="entry name" value="Nucleic acid-binding proteins"/>
    <property type="match status" value="1"/>
</dbReference>
<dbReference type="HAMAP" id="MF_00292">
    <property type="entry name" value="Ribosomal_eS28"/>
    <property type="match status" value="1"/>
</dbReference>
<dbReference type="InterPro" id="IPR012340">
    <property type="entry name" value="NA-bd_OB-fold"/>
</dbReference>
<dbReference type="InterPro" id="IPR000289">
    <property type="entry name" value="Ribosomal_eS28"/>
</dbReference>
<dbReference type="InterPro" id="IPR028626">
    <property type="entry name" value="Ribosomal_eS28_CS"/>
</dbReference>
<dbReference type="PANTHER" id="PTHR10769">
    <property type="entry name" value="40S RIBOSOMAL PROTEIN S28"/>
    <property type="match status" value="1"/>
</dbReference>
<dbReference type="PANTHER" id="PTHR10769:SF3">
    <property type="entry name" value="SMALL RIBOSOMAL SUBUNIT PROTEIN ES28"/>
    <property type="match status" value="1"/>
</dbReference>
<dbReference type="Pfam" id="PF01200">
    <property type="entry name" value="Ribosomal_S28e"/>
    <property type="match status" value="1"/>
</dbReference>
<dbReference type="SUPFAM" id="SSF50249">
    <property type="entry name" value="Nucleic acid-binding proteins"/>
    <property type="match status" value="1"/>
</dbReference>
<dbReference type="PROSITE" id="PS00961">
    <property type="entry name" value="RIBOSOMAL_S28E"/>
    <property type="match status" value="1"/>
</dbReference>
<feature type="chain" id="PRO_0000136825" description="Small ribosomal subunit protein eS28">
    <location>
        <begin position="1"/>
        <end position="69"/>
    </location>
</feature>
<feature type="modified residue" description="N-acetylmethionine" evidence="4">
    <location>
        <position position="1"/>
    </location>
</feature>
<feature type="modified residue" description="Phosphoserine" evidence="1">
    <location>
        <position position="41"/>
    </location>
</feature>
<gene>
    <name type="primary">Rps28</name>
</gene>
<name>RS28_RAT</name>
<proteinExistence type="evidence at protein level"/>
<reference key="1">
    <citation type="journal article" date="1991" name="Biochem. Biophys. Res. Commun.">
        <title>The primary structure of rat ribosomal protein S28.</title>
        <authorList>
            <person name="Chan Y.-L."/>
            <person name="Olvera J."/>
            <person name="Wool I.G."/>
        </authorList>
    </citation>
    <scope>NUCLEOTIDE SEQUENCE [MRNA]</scope>
    <scope>ACETYLATION AT MET-1</scope>
    <scope>PROTEIN SEQUENCE OF 36-68</scope>
    <source>
        <strain>Sprague-Dawley</strain>
        <tissue>Liver</tissue>
    </source>
</reference>
<evidence type="ECO:0000250" key="1">
    <source>
        <dbReference type="UniProtKB" id="P62857"/>
    </source>
</evidence>
<evidence type="ECO:0000250" key="2">
    <source>
        <dbReference type="UniProtKB" id="Q6QAT1"/>
    </source>
</evidence>
<evidence type="ECO:0000305" key="3"/>
<evidence type="ECO:0000305" key="4">
    <source>
    </source>
</evidence>